<sequence length="128" mass="14602">MNLIEQIEQEEIKRLTANKTIPPFAPGDTVIVNVNVVEGNRKRVQAYEGVVIAKRNRGLNSSFIVRKISSGEGVERTFQLYSPLLASIEVKRRGDVRRAKLYYLRERSGKSARIKEKLSFKRKEVAAQ</sequence>
<protein>
    <recommendedName>
        <fullName evidence="1">Large ribosomal subunit protein bL19</fullName>
    </recommendedName>
    <alternativeName>
        <fullName evidence="2">50S ribosomal protein L19</fullName>
    </alternativeName>
</protein>
<dbReference type="EMBL" id="AL646052">
    <property type="protein sequence ID" value="CAD14638.1"/>
    <property type="molecule type" value="Genomic_DNA"/>
</dbReference>
<dbReference type="RefSeq" id="WP_011000888.1">
    <property type="nucleotide sequence ID" value="NC_003295.1"/>
</dbReference>
<dbReference type="SMR" id="Q8Y0V7"/>
<dbReference type="STRING" id="267608.RSc0936"/>
<dbReference type="EnsemblBacteria" id="CAD14638">
    <property type="protein sequence ID" value="CAD14638"/>
    <property type="gene ID" value="RSc0936"/>
</dbReference>
<dbReference type="KEGG" id="rso:RSc0936"/>
<dbReference type="eggNOG" id="COG0335">
    <property type="taxonomic scope" value="Bacteria"/>
</dbReference>
<dbReference type="HOGENOM" id="CLU_103507_1_0_4"/>
<dbReference type="Proteomes" id="UP000001436">
    <property type="component" value="Chromosome"/>
</dbReference>
<dbReference type="GO" id="GO:0022625">
    <property type="term" value="C:cytosolic large ribosomal subunit"/>
    <property type="evidence" value="ECO:0007669"/>
    <property type="project" value="TreeGrafter"/>
</dbReference>
<dbReference type="GO" id="GO:0003735">
    <property type="term" value="F:structural constituent of ribosome"/>
    <property type="evidence" value="ECO:0007669"/>
    <property type="project" value="InterPro"/>
</dbReference>
<dbReference type="GO" id="GO:0006412">
    <property type="term" value="P:translation"/>
    <property type="evidence" value="ECO:0007669"/>
    <property type="project" value="UniProtKB-UniRule"/>
</dbReference>
<dbReference type="FunFam" id="2.30.30.790:FF:000001">
    <property type="entry name" value="50S ribosomal protein L19"/>
    <property type="match status" value="1"/>
</dbReference>
<dbReference type="Gene3D" id="2.30.30.790">
    <property type="match status" value="1"/>
</dbReference>
<dbReference type="HAMAP" id="MF_00402">
    <property type="entry name" value="Ribosomal_bL19"/>
    <property type="match status" value="1"/>
</dbReference>
<dbReference type="InterPro" id="IPR001857">
    <property type="entry name" value="Ribosomal_bL19"/>
</dbReference>
<dbReference type="InterPro" id="IPR018257">
    <property type="entry name" value="Ribosomal_bL19_CS"/>
</dbReference>
<dbReference type="InterPro" id="IPR038657">
    <property type="entry name" value="Ribosomal_bL19_sf"/>
</dbReference>
<dbReference type="InterPro" id="IPR008991">
    <property type="entry name" value="Translation_prot_SH3-like_sf"/>
</dbReference>
<dbReference type="NCBIfam" id="TIGR01024">
    <property type="entry name" value="rplS_bact"/>
    <property type="match status" value="1"/>
</dbReference>
<dbReference type="PANTHER" id="PTHR15680:SF9">
    <property type="entry name" value="LARGE RIBOSOMAL SUBUNIT PROTEIN BL19M"/>
    <property type="match status" value="1"/>
</dbReference>
<dbReference type="PANTHER" id="PTHR15680">
    <property type="entry name" value="RIBOSOMAL PROTEIN L19"/>
    <property type="match status" value="1"/>
</dbReference>
<dbReference type="Pfam" id="PF01245">
    <property type="entry name" value="Ribosomal_L19"/>
    <property type="match status" value="1"/>
</dbReference>
<dbReference type="PIRSF" id="PIRSF002191">
    <property type="entry name" value="Ribosomal_L19"/>
    <property type="match status" value="1"/>
</dbReference>
<dbReference type="PRINTS" id="PR00061">
    <property type="entry name" value="RIBOSOMALL19"/>
</dbReference>
<dbReference type="SUPFAM" id="SSF50104">
    <property type="entry name" value="Translation proteins SH3-like domain"/>
    <property type="match status" value="1"/>
</dbReference>
<dbReference type="PROSITE" id="PS01015">
    <property type="entry name" value="RIBOSOMAL_L19"/>
    <property type="match status" value="1"/>
</dbReference>
<comment type="function">
    <text evidence="1">This protein is located at the 30S-50S ribosomal subunit interface and may play a role in the structure and function of the aminoacyl-tRNA binding site.</text>
</comment>
<comment type="similarity">
    <text evidence="1">Belongs to the bacterial ribosomal protein bL19 family.</text>
</comment>
<feature type="chain" id="PRO_0000163513" description="Large ribosomal subunit protein bL19">
    <location>
        <begin position="1"/>
        <end position="128"/>
    </location>
</feature>
<name>RL19_RALN1</name>
<organism>
    <name type="scientific">Ralstonia nicotianae (strain ATCC BAA-1114 / GMI1000)</name>
    <name type="common">Ralstonia solanacearum</name>
    <dbReference type="NCBI Taxonomy" id="267608"/>
    <lineage>
        <taxon>Bacteria</taxon>
        <taxon>Pseudomonadati</taxon>
        <taxon>Pseudomonadota</taxon>
        <taxon>Betaproteobacteria</taxon>
        <taxon>Burkholderiales</taxon>
        <taxon>Burkholderiaceae</taxon>
        <taxon>Ralstonia</taxon>
        <taxon>Ralstonia solanacearum species complex</taxon>
    </lineage>
</organism>
<keyword id="KW-1185">Reference proteome</keyword>
<keyword id="KW-0687">Ribonucleoprotein</keyword>
<keyword id="KW-0689">Ribosomal protein</keyword>
<proteinExistence type="inferred from homology"/>
<evidence type="ECO:0000255" key="1">
    <source>
        <dbReference type="HAMAP-Rule" id="MF_00402"/>
    </source>
</evidence>
<evidence type="ECO:0000305" key="2"/>
<reference key="1">
    <citation type="journal article" date="2002" name="Nature">
        <title>Genome sequence of the plant pathogen Ralstonia solanacearum.</title>
        <authorList>
            <person name="Salanoubat M."/>
            <person name="Genin S."/>
            <person name="Artiguenave F."/>
            <person name="Gouzy J."/>
            <person name="Mangenot S."/>
            <person name="Arlat M."/>
            <person name="Billault A."/>
            <person name="Brottier P."/>
            <person name="Camus J.-C."/>
            <person name="Cattolico L."/>
            <person name="Chandler M."/>
            <person name="Choisne N."/>
            <person name="Claudel-Renard C."/>
            <person name="Cunnac S."/>
            <person name="Demange N."/>
            <person name="Gaspin C."/>
            <person name="Lavie M."/>
            <person name="Moisan A."/>
            <person name="Robert C."/>
            <person name="Saurin W."/>
            <person name="Schiex T."/>
            <person name="Siguier P."/>
            <person name="Thebault P."/>
            <person name="Whalen M."/>
            <person name="Wincker P."/>
            <person name="Levy M."/>
            <person name="Weissenbach J."/>
            <person name="Boucher C.A."/>
        </authorList>
    </citation>
    <scope>NUCLEOTIDE SEQUENCE [LARGE SCALE GENOMIC DNA]</scope>
    <source>
        <strain>ATCC BAA-1114 / GMI1000</strain>
    </source>
</reference>
<accession>Q8Y0V7</accession>
<gene>
    <name evidence="1" type="primary">rplS</name>
    <name type="ordered locus">RSc0936</name>
    <name type="ORF">RS04478</name>
</gene>